<accession>Q9CJJ0</accession>
<evidence type="ECO:0000255" key="1">
    <source>
        <dbReference type="HAMAP-Rule" id="MF_01453"/>
    </source>
</evidence>
<reference key="1">
    <citation type="journal article" date="2001" name="Genome Res.">
        <title>The complete genome sequence of the lactic acid bacterium Lactococcus lactis ssp. lactis IL1403.</title>
        <authorList>
            <person name="Bolotin A."/>
            <person name="Wincker P."/>
            <person name="Mauger S."/>
            <person name="Jaillon O."/>
            <person name="Malarme K."/>
            <person name="Weissenbach J."/>
            <person name="Ehrlich S.D."/>
            <person name="Sorokin A."/>
        </authorList>
    </citation>
    <scope>NUCLEOTIDE SEQUENCE [LARGE SCALE GENOMIC DNA]</scope>
    <source>
        <strain>IL1403</strain>
    </source>
</reference>
<sequence length="1099" mass="127009">MEILYTEITQDLTEGLLEISLEELEKNRKVYYIVPSSMSFEKEKEILERLAKGSDSAVFDLLVTRFKQLPYYFDKREKATTKTELGTAGLSMLFRRVLRSFSKEEIPLYFSLQDSAGFLEMLIQLRTELLTANLSVENLPDSPKNQELKKILSRFEEKLANDYANYSEFGDFTSRLADGEFDFQLKDVTIVIDGYTRFSAEEELFIESIQDRVARFVIGTYSDENSLTAGSETIYISTSQMIGRFRSKFPVELRKMAFSSVNEVYNKLTKLLDLDSRFAISDQNIEINSADAKYFRIWEAENQKVEIEGVAKEIRQKISQGAFFKDFTVLVGDPAAYEITLKEIFELYEIPFFYAQEESMSQHPLVIFFESLLSIKKNNYGTDDVVNLLKSKVYTDVNLDEEVIDYFEYYVQKYKISGRKKFTEAFNESEFSKIELVNQLRENLLGNDSPLQVFLGTNRQKTGKKWVSDLQVLLENGNVMANMNTYFSEAESENKHQMADKHEQVWQMLISILNEFLAVFSDEKLKSVEFLDILLAGLKNAKYRQIPANVDVVNIKDYELVEPKTNKYIYAIGLSQTNFPRIKKNSTLLSDEERLEINQTTDENQFIEQLNVVNYQKNQFTVLSLVNSAKETLVLSMPQIMANEQGEFSPVFQLFLNHSDEKILQKIQEVNLFESLEHIGNSRSVISMIGKIERELVETEEKNDDKRVFWSSIFRILVKSNPDFQKILLDLAKDIDTVNLSQETLDQIYGDKLYASVSSFERFYNCEYQYFLETTLGLETFENIDINSKIVGNFFHEVFEKVMQEEALSAENFDEKLTKVLHDVDSNYSRYFTHDATARFTWTNLEEIVRQTATVLKETVSTDELKTLLTESSFGLPKSELGNFSVDDIYLRGRIDRLDQLSSDYLGAIDYKSSAHSFKLQDAYDGLSLQFMTYLDVIKEAFPNQKIWGALYLQFKNQPINLSEINHLSEIAGLLKESMRYDGLVLEEAADQIKAIENITVKKSNIYNQEEFEQLLKLNENHYQHAGQRLKSGQIAINPIMKRSEGIDQTGNVRGCRYCPLKSICRFEANVHMNDHSREIGQKSQAEILAELKGEGRNE</sequence>
<comment type="function">
    <text evidence="1">The heterodimer acts as both an ATP-dependent DNA helicase and an ATP-dependent, dual-direction single-stranded exonuclease. Recognizes the chi site generating a DNA molecule suitable for the initiation of homologous recombination. This subunit has 5' -&gt; 3' nuclease activity but not helicase activity.</text>
</comment>
<comment type="cofactor">
    <cofactor evidence="1">
        <name>Mg(2+)</name>
        <dbReference type="ChEBI" id="CHEBI:18420"/>
    </cofactor>
</comment>
<comment type="cofactor">
    <cofactor evidence="1">
        <name>[4Fe-4S] cluster</name>
        <dbReference type="ChEBI" id="CHEBI:49883"/>
    </cofactor>
    <text evidence="1">Binds 1 [4Fe-4S] cluster.</text>
</comment>
<comment type="subunit">
    <text evidence="1">Heterodimer of AddA and RexB.</text>
</comment>
<comment type="miscellaneous">
    <text evidence="1">Despite having helicase-like domains, this subunit does not have helicase activity.</text>
</comment>
<comment type="similarity">
    <text evidence="1">Belongs to the helicase family. AddB/RexB type 2 subfamily.</text>
</comment>
<dbReference type="EC" id="3.1.-.-" evidence="1"/>
<dbReference type="EMBL" id="AE005176">
    <property type="protein sequence ID" value="AAK04101.1"/>
    <property type="molecule type" value="Genomic_DNA"/>
</dbReference>
<dbReference type="PIR" id="C86625">
    <property type="entry name" value="C86625"/>
</dbReference>
<dbReference type="RefSeq" id="NP_266159.1">
    <property type="nucleotide sequence ID" value="NC_002662.1"/>
</dbReference>
<dbReference type="RefSeq" id="WP_010905023.1">
    <property type="nucleotide sequence ID" value="NC_002662.1"/>
</dbReference>
<dbReference type="SMR" id="Q9CJJ0"/>
<dbReference type="PaxDb" id="272623-L0252"/>
<dbReference type="EnsemblBacteria" id="AAK04101">
    <property type="protein sequence ID" value="AAK04101"/>
    <property type="gene ID" value="L0252"/>
</dbReference>
<dbReference type="KEGG" id="lla:L0252"/>
<dbReference type="PATRIC" id="fig|272623.7.peg.3"/>
<dbReference type="eggNOG" id="COG3857">
    <property type="taxonomic scope" value="Bacteria"/>
</dbReference>
<dbReference type="HOGENOM" id="CLU_007838_0_0_9"/>
<dbReference type="OrthoDB" id="9758506at2"/>
<dbReference type="Proteomes" id="UP000002196">
    <property type="component" value="Chromosome"/>
</dbReference>
<dbReference type="GO" id="GO:0051539">
    <property type="term" value="F:4 iron, 4 sulfur cluster binding"/>
    <property type="evidence" value="ECO:0007669"/>
    <property type="project" value="UniProtKB-KW"/>
</dbReference>
<dbReference type="GO" id="GO:0008409">
    <property type="term" value="F:5'-3' exonuclease activity"/>
    <property type="evidence" value="ECO:0007669"/>
    <property type="project" value="UniProtKB-UniRule"/>
</dbReference>
<dbReference type="GO" id="GO:0005524">
    <property type="term" value="F:ATP binding"/>
    <property type="evidence" value="ECO:0007669"/>
    <property type="project" value="UniProtKB-UniRule"/>
</dbReference>
<dbReference type="GO" id="GO:0003690">
    <property type="term" value="F:double-stranded DNA binding"/>
    <property type="evidence" value="ECO:0007669"/>
    <property type="project" value="UniProtKB-UniRule"/>
</dbReference>
<dbReference type="GO" id="GO:0004386">
    <property type="term" value="F:helicase activity"/>
    <property type="evidence" value="ECO:0007669"/>
    <property type="project" value="UniProtKB-KW"/>
</dbReference>
<dbReference type="GO" id="GO:0016817">
    <property type="term" value="F:hydrolase activity, acting on acid anhydrides"/>
    <property type="evidence" value="ECO:0007669"/>
    <property type="project" value="InterPro"/>
</dbReference>
<dbReference type="GO" id="GO:0046872">
    <property type="term" value="F:metal ion binding"/>
    <property type="evidence" value="ECO:0007669"/>
    <property type="project" value="UniProtKB-KW"/>
</dbReference>
<dbReference type="GO" id="GO:0000724">
    <property type="term" value="P:double-strand break repair via homologous recombination"/>
    <property type="evidence" value="ECO:0007669"/>
    <property type="project" value="UniProtKB-UniRule"/>
</dbReference>
<dbReference type="Gene3D" id="3.90.320.10">
    <property type="match status" value="1"/>
</dbReference>
<dbReference type="Gene3D" id="3.40.50.300">
    <property type="entry name" value="P-loop containing nucleotide triphosphate hydrolases"/>
    <property type="match status" value="3"/>
</dbReference>
<dbReference type="HAMAP" id="MF_01453">
    <property type="entry name" value="AddB_type2"/>
    <property type="match status" value="1"/>
</dbReference>
<dbReference type="InterPro" id="IPR049035">
    <property type="entry name" value="ADDB_N"/>
</dbReference>
<dbReference type="InterPro" id="IPR014141">
    <property type="entry name" value="DNA_helicase_suRexB"/>
</dbReference>
<dbReference type="InterPro" id="IPR027417">
    <property type="entry name" value="P-loop_NTPase"/>
</dbReference>
<dbReference type="InterPro" id="IPR011604">
    <property type="entry name" value="PDDEXK-like_dom_sf"/>
</dbReference>
<dbReference type="InterPro" id="IPR038726">
    <property type="entry name" value="PDDEXK_AddAB-type"/>
</dbReference>
<dbReference type="InterPro" id="IPR011335">
    <property type="entry name" value="Restrct_endonuc-II-like"/>
</dbReference>
<dbReference type="NCBIfam" id="TIGR02774">
    <property type="entry name" value="rexB_recomb"/>
    <property type="match status" value="1"/>
</dbReference>
<dbReference type="PANTHER" id="PTHR30591">
    <property type="entry name" value="RECBCD ENZYME SUBUNIT RECC"/>
    <property type="match status" value="1"/>
</dbReference>
<dbReference type="PANTHER" id="PTHR30591:SF1">
    <property type="entry name" value="RECBCD ENZYME SUBUNIT RECC"/>
    <property type="match status" value="1"/>
</dbReference>
<dbReference type="Pfam" id="PF21445">
    <property type="entry name" value="ADDB_N"/>
    <property type="match status" value="1"/>
</dbReference>
<dbReference type="Pfam" id="PF12705">
    <property type="entry name" value="PDDEXK_1"/>
    <property type="match status" value="1"/>
</dbReference>
<dbReference type="SUPFAM" id="SSF52540">
    <property type="entry name" value="P-loop containing nucleoside triphosphate hydrolases"/>
    <property type="match status" value="1"/>
</dbReference>
<dbReference type="SUPFAM" id="SSF52980">
    <property type="entry name" value="Restriction endonuclease-like"/>
    <property type="match status" value="1"/>
</dbReference>
<organism>
    <name type="scientific">Lactococcus lactis subsp. lactis (strain IL1403)</name>
    <name type="common">Streptococcus lactis</name>
    <dbReference type="NCBI Taxonomy" id="272623"/>
    <lineage>
        <taxon>Bacteria</taxon>
        <taxon>Bacillati</taxon>
        <taxon>Bacillota</taxon>
        <taxon>Bacilli</taxon>
        <taxon>Lactobacillales</taxon>
        <taxon>Streptococcaceae</taxon>
        <taxon>Lactococcus</taxon>
    </lineage>
</organism>
<keyword id="KW-0004">4Fe-4S</keyword>
<keyword id="KW-0067">ATP-binding</keyword>
<keyword id="KW-0227">DNA damage</keyword>
<keyword id="KW-0234">DNA repair</keyword>
<keyword id="KW-0238">DNA-binding</keyword>
<keyword id="KW-0269">Exonuclease</keyword>
<keyword id="KW-0347">Helicase</keyword>
<keyword id="KW-0378">Hydrolase</keyword>
<keyword id="KW-0408">Iron</keyword>
<keyword id="KW-0411">Iron-sulfur</keyword>
<keyword id="KW-0479">Metal-binding</keyword>
<keyword id="KW-0540">Nuclease</keyword>
<keyword id="KW-0547">Nucleotide-binding</keyword>
<keyword id="KW-1185">Reference proteome</keyword>
<feature type="chain" id="PRO_0000379382" description="ATP-dependent helicase/deoxyribonuclease subunit B">
    <location>
        <begin position="1"/>
        <end position="1099"/>
    </location>
</feature>
<feature type="binding site" evidence="1">
    <location>
        <position position="766"/>
    </location>
    <ligand>
        <name>[4Fe-4S] cluster</name>
        <dbReference type="ChEBI" id="CHEBI:49883"/>
    </ligand>
</feature>
<feature type="binding site" evidence="1">
    <location>
        <position position="1056"/>
    </location>
    <ligand>
        <name>[4Fe-4S] cluster</name>
        <dbReference type="ChEBI" id="CHEBI:49883"/>
    </ligand>
</feature>
<feature type="binding site" evidence="1">
    <location>
        <position position="1059"/>
    </location>
    <ligand>
        <name>[4Fe-4S] cluster</name>
        <dbReference type="ChEBI" id="CHEBI:49883"/>
    </ligand>
</feature>
<feature type="binding site" evidence="1">
    <location>
        <position position="1065"/>
    </location>
    <ligand>
        <name>[4Fe-4S] cluster</name>
        <dbReference type="ChEBI" id="CHEBI:49883"/>
    </ligand>
</feature>
<protein>
    <recommendedName>
        <fullName evidence="1">ATP-dependent helicase/deoxyribonuclease subunit B</fullName>
        <ecNumber evidence="1">3.1.-.-</ecNumber>
    </recommendedName>
    <alternativeName>
        <fullName evidence="1">ATP-dependent helicase/nuclease subunit RexB</fullName>
    </alternativeName>
</protein>
<gene>
    <name evidence="1" type="primary">rexB</name>
    <name type="ordered locus">LL0003</name>
    <name type="ORF">L025</name>
    <name type="ORF">L0252</name>
</gene>
<proteinExistence type="inferred from homology"/>
<name>ADDB_LACLA</name>